<protein>
    <recommendedName>
        <fullName>DNA mismatch repair protein Msh3</fullName>
    </recommendedName>
    <alternativeName>
        <fullName>MutS protein homolog 3</fullName>
    </alternativeName>
</protein>
<evidence type="ECO:0000250" key="1"/>
<evidence type="ECO:0000256" key="2">
    <source>
        <dbReference type="SAM" id="MobiDB-lite"/>
    </source>
</evidence>
<evidence type="ECO:0000305" key="3"/>
<reference key="1">
    <citation type="journal article" date="2005" name="Nature">
        <title>The genome of the social amoeba Dictyostelium discoideum.</title>
        <authorList>
            <person name="Eichinger L."/>
            <person name="Pachebat J.A."/>
            <person name="Gloeckner G."/>
            <person name="Rajandream M.A."/>
            <person name="Sucgang R."/>
            <person name="Berriman M."/>
            <person name="Song J."/>
            <person name="Olsen R."/>
            <person name="Szafranski K."/>
            <person name="Xu Q."/>
            <person name="Tunggal B."/>
            <person name="Kummerfeld S."/>
            <person name="Madera M."/>
            <person name="Konfortov B.A."/>
            <person name="Rivero F."/>
            <person name="Bankier A.T."/>
            <person name="Lehmann R."/>
            <person name="Hamlin N."/>
            <person name="Davies R."/>
            <person name="Gaudet P."/>
            <person name="Fey P."/>
            <person name="Pilcher K."/>
            <person name="Chen G."/>
            <person name="Saunders D."/>
            <person name="Sodergren E.J."/>
            <person name="Davis P."/>
            <person name="Kerhornou A."/>
            <person name="Nie X."/>
            <person name="Hall N."/>
            <person name="Anjard C."/>
            <person name="Hemphill L."/>
            <person name="Bason N."/>
            <person name="Farbrother P."/>
            <person name="Desany B."/>
            <person name="Just E."/>
            <person name="Morio T."/>
            <person name="Rost R."/>
            <person name="Churcher C.M."/>
            <person name="Cooper J."/>
            <person name="Haydock S."/>
            <person name="van Driessche N."/>
            <person name="Cronin A."/>
            <person name="Goodhead I."/>
            <person name="Muzny D.M."/>
            <person name="Mourier T."/>
            <person name="Pain A."/>
            <person name="Lu M."/>
            <person name="Harper D."/>
            <person name="Lindsay R."/>
            <person name="Hauser H."/>
            <person name="James K.D."/>
            <person name="Quiles M."/>
            <person name="Madan Babu M."/>
            <person name="Saito T."/>
            <person name="Buchrieser C."/>
            <person name="Wardroper A."/>
            <person name="Felder M."/>
            <person name="Thangavelu M."/>
            <person name="Johnson D."/>
            <person name="Knights A."/>
            <person name="Loulseged H."/>
            <person name="Mungall K.L."/>
            <person name="Oliver K."/>
            <person name="Price C."/>
            <person name="Quail M.A."/>
            <person name="Urushihara H."/>
            <person name="Hernandez J."/>
            <person name="Rabbinowitsch E."/>
            <person name="Steffen D."/>
            <person name="Sanders M."/>
            <person name="Ma J."/>
            <person name="Kohara Y."/>
            <person name="Sharp S."/>
            <person name="Simmonds M.N."/>
            <person name="Spiegler S."/>
            <person name="Tivey A."/>
            <person name="Sugano S."/>
            <person name="White B."/>
            <person name="Walker D."/>
            <person name="Woodward J.R."/>
            <person name="Winckler T."/>
            <person name="Tanaka Y."/>
            <person name="Shaulsky G."/>
            <person name="Schleicher M."/>
            <person name="Weinstock G.M."/>
            <person name="Rosenthal A."/>
            <person name="Cox E.C."/>
            <person name="Chisholm R.L."/>
            <person name="Gibbs R.A."/>
            <person name="Loomis W.F."/>
            <person name="Platzer M."/>
            <person name="Kay R.R."/>
            <person name="Williams J.G."/>
            <person name="Dear P.H."/>
            <person name="Noegel A.A."/>
            <person name="Barrell B.G."/>
            <person name="Kuspa A."/>
        </authorList>
    </citation>
    <scope>NUCLEOTIDE SEQUENCE [LARGE SCALE GENOMIC DNA]</scope>
    <source>
        <strain>AX4</strain>
    </source>
</reference>
<gene>
    <name type="primary">msh3</name>
    <name type="ORF">DDB_G0281683</name>
</gene>
<feature type="chain" id="PRO_0000328253" description="DNA mismatch repair protein Msh3">
    <location>
        <begin position="1"/>
        <end position="1428"/>
    </location>
</feature>
<feature type="region of interest" description="Disordered" evidence="2">
    <location>
        <begin position="1"/>
        <end position="391"/>
    </location>
</feature>
<feature type="region of interest" description="Disordered" evidence="2">
    <location>
        <begin position="405"/>
        <end position="451"/>
    </location>
</feature>
<feature type="region of interest" description="Disordered" evidence="2">
    <location>
        <begin position="592"/>
        <end position="612"/>
    </location>
</feature>
<feature type="compositionally biased region" description="Basic and acidic residues" evidence="2">
    <location>
        <begin position="9"/>
        <end position="18"/>
    </location>
</feature>
<feature type="compositionally biased region" description="Polar residues" evidence="2">
    <location>
        <begin position="36"/>
        <end position="48"/>
    </location>
</feature>
<feature type="compositionally biased region" description="Basic and acidic residues" evidence="2">
    <location>
        <begin position="49"/>
        <end position="80"/>
    </location>
</feature>
<feature type="compositionally biased region" description="Basic and acidic residues" evidence="2">
    <location>
        <begin position="88"/>
        <end position="98"/>
    </location>
</feature>
<feature type="compositionally biased region" description="Polar residues" evidence="2">
    <location>
        <begin position="100"/>
        <end position="125"/>
    </location>
</feature>
<feature type="compositionally biased region" description="Basic and acidic residues" evidence="2">
    <location>
        <begin position="128"/>
        <end position="149"/>
    </location>
</feature>
<feature type="compositionally biased region" description="Acidic residues" evidence="2">
    <location>
        <begin position="186"/>
        <end position="208"/>
    </location>
</feature>
<feature type="compositionally biased region" description="Low complexity" evidence="2">
    <location>
        <begin position="217"/>
        <end position="245"/>
    </location>
</feature>
<feature type="compositionally biased region" description="Basic residues" evidence="2">
    <location>
        <begin position="270"/>
        <end position="280"/>
    </location>
</feature>
<feature type="compositionally biased region" description="Acidic residues" evidence="2">
    <location>
        <begin position="284"/>
        <end position="309"/>
    </location>
</feature>
<feature type="compositionally biased region" description="Acidic residues" evidence="2">
    <location>
        <begin position="333"/>
        <end position="345"/>
    </location>
</feature>
<feature type="compositionally biased region" description="Basic and acidic residues" evidence="2">
    <location>
        <begin position="346"/>
        <end position="357"/>
    </location>
</feature>
<feature type="compositionally biased region" description="Gly residues" evidence="2">
    <location>
        <begin position="413"/>
        <end position="424"/>
    </location>
</feature>
<feature type="compositionally biased region" description="Basic and acidic residues" evidence="2">
    <location>
        <begin position="592"/>
        <end position="601"/>
    </location>
</feature>
<accession>Q1ZXH0</accession>
<dbReference type="EMBL" id="AAFI02000042">
    <property type="protein sequence ID" value="EAS66875.1"/>
    <property type="molecule type" value="Genomic_DNA"/>
</dbReference>
<dbReference type="RefSeq" id="XP_001134558.1">
    <property type="nucleotide sequence ID" value="XM_001134558.1"/>
</dbReference>
<dbReference type="SMR" id="Q1ZXH0"/>
<dbReference type="FunCoup" id="Q1ZXH0">
    <property type="interactions" value="418"/>
</dbReference>
<dbReference type="STRING" id="44689.Q1ZXH0"/>
<dbReference type="PaxDb" id="44689-DDB0232960"/>
<dbReference type="EnsemblProtists" id="EAS66875">
    <property type="protein sequence ID" value="EAS66875"/>
    <property type="gene ID" value="DDB_G0281683"/>
</dbReference>
<dbReference type="GeneID" id="8623184"/>
<dbReference type="KEGG" id="ddi:DDB_G0281683"/>
<dbReference type="dictyBase" id="DDB_G0281683">
    <property type="gene designation" value="msh3"/>
</dbReference>
<dbReference type="VEuPathDB" id="AmoebaDB:DDB_G0281683"/>
<dbReference type="eggNOG" id="KOG0218">
    <property type="taxonomic scope" value="Eukaryota"/>
</dbReference>
<dbReference type="HOGENOM" id="CLU_002472_0_2_1"/>
<dbReference type="InParanoid" id="Q1ZXH0"/>
<dbReference type="OMA" id="WIAVMYN"/>
<dbReference type="PhylomeDB" id="Q1ZXH0"/>
<dbReference type="Reactome" id="R-DDI-5358606">
    <property type="pathway name" value="Mismatch repair (MMR) directed by MSH2:MSH3 (MutSbeta)"/>
</dbReference>
<dbReference type="PRO" id="PR:Q1ZXH0"/>
<dbReference type="Proteomes" id="UP000002195">
    <property type="component" value="Chromosome 3"/>
</dbReference>
<dbReference type="GO" id="GO:0032301">
    <property type="term" value="C:MutSalpha complex"/>
    <property type="evidence" value="ECO:0000318"/>
    <property type="project" value="GO_Central"/>
</dbReference>
<dbReference type="GO" id="GO:0032302">
    <property type="term" value="C:MutSbeta complex"/>
    <property type="evidence" value="ECO:0000250"/>
    <property type="project" value="dictyBase"/>
</dbReference>
<dbReference type="GO" id="GO:0005634">
    <property type="term" value="C:nucleus"/>
    <property type="evidence" value="ECO:0000318"/>
    <property type="project" value="GO_Central"/>
</dbReference>
<dbReference type="GO" id="GO:0005524">
    <property type="term" value="F:ATP binding"/>
    <property type="evidence" value="ECO:0007669"/>
    <property type="project" value="UniProtKB-KW"/>
</dbReference>
<dbReference type="GO" id="GO:0140664">
    <property type="term" value="F:ATP-dependent DNA damage sensor activity"/>
    <property type="evidence" value="ECO:0007669"/>
    <property type="project" value="InterPro"/>
</dbReference>
<dbReference type="GO" id="GO:0032135">
    <property type="term" value="F:DNA insertion or deletion binding"/>
    <property type="evidence" value="ECO:0000250"/>
    <property type="project" value="dictyBase"/>
</dbReference>
<dbReference type="GO" id="GO:0030983">
    <property type="term" value="F:mismatched DNA binding"/>
    <property type="evidence" value="ECO:0000318"/>
    <property type="project" value="GO_Central"/>
</dbReference>
<dbReference type="GO" id="GO:0006310">
    <property type="term" value="P:DNA recombination"/>
    <property type="evidence" value="ECO:0000250"/>
    <property type="project" value="dictyBase"/>
</dbReference>
<dbReference type="GO" id="GO:0006298">
    <property type="term" value="P:mismatch repair"/>
    <property type="evidence" value="ECO:0000250"/>
    <property type="project" value="dictyBase"/>
</dbReference>
<dbReference type="GO" id="GO:0006312">
    <property type="term" value="P:mitotic recombination"/>
    <property type="evidence" value="ECO:0000250"/>
    <property type="project" value="dictyBase"/>
</dbReference>
<dbReference type="GO" id="GO:0000735">
    <property type="term" value="P:removal of nonhomologous ends"/>
    <property type="evidence" value="ECO:0000250"/>
    <property type="project" value="dictyBase"/>
</dbReference>
<dbReference type="FunFam" id="3.40.1170.10:FF:000004">
    <property type="entry name" value="DNA mismatch repair protein"/>
    <property type="match status" value="1"/>
</dbReference>
<dbReference type="FunFam" id="1.10.1420.10:FF:000004">
    <property type="entry name" value="DNA mismatch repair protein Msh3"/>
    <property type="match status" value="1"/>
</dbReference>
<dbReference type="FunFam" id="3.30.420.110:FF:000052">
    <property type="entry name" value="DNA mismatch repair protein Msh3"/>
    <property type="match status" value="1"/>
</dbReference>
<dbReference type="FunFam" id="3.40.50.300:FF:005950">
    <property type="entry name" value="DNA mismatch repair protein Msh3"/>
    <property type="match status" value="1"/>
</dbReference>
<dbReference type="Gene3D" id="1.10.1420.10">
    <property type="match status" value="2"/>
</dbReference>
<dbReference type="Gene3D" id="3.40.1170.10">
    <property type="entry name" value="DNA repair protein MutS, domain I"/>
    <property type="match status" value="1"/>
</dbReference>
<dbReference type="Gene3D" id="3.30.420.110">
    <property type="entry name" value="MutS, connector domain"/>
    <property type="match status" value="1"/>
</dbReference>
<dbReference type="Gene3D" id="3.40.50.300">
    <property type="entry name" value="P-loop containing nucleotide triphosphate hydrolases"/>
    <property type="match status" value="1"/>
</dbReference>
<dbReference type="InterPro" id="IPR007695">
    <property type="entry name" value="DNA_mismatch_repair_MutS-lik_N"/>
</dbReference>
<dbReference type="InterPro" id="IPR017261">
    <property type="entry name" value="DNA_mismatch_repair_MutS/MSH"/>
</dbReference>
<dbReference type="InterPro" id="IPR000432">
    <property type="entry name" value="DNA_mismatch_repair_MutS_C"/>
</dbReference>
<dbReference type="InterPro" id="IPR007696">
    <property type="entry name" value="DNA_mismatch_repair_MutS_core"/>
</dbReference>
<dbReference type="InterPro" id="IPR016151">
    <property type="entry name" value="DNA_mismatch_repair_MutS_N"/>
</dbReference>
<dbReference type="InterPro" id="IPR036187">
    <property type="entry name" value="DNA_mismatch_repair_MutS_sf"/>
</dbReference>
<dbReference type="InterPro" id="IPR007860">
    <property type="entry name" value="DNA_mmatch_repair_MutS_con_dom"/>
</dbReference>
<dbReference type="InterPro" id="IPR045076">
    <property type="entry name" value="MutS"/>
</dbReference>
<dbReference type="InterPro" id="IPR036678">
    <property type="entry name" value="MutS_con_dom_sf"/>
</dbReference>
<dbReference type="InterPro" id="IPR027417">
    <property type="entry name" value="P-loop_NTPase"/>
</dbReference>
<dbReference type="NCBIfam" id="NF003810">
    <property type="entry name" value="PRK05399.1"/>
    <property type="match status" value="1"/>
</dbReference>
<dbReference type="PANTHER" id="PTHR11361:SF153">
    <property type="entry name" value="DNA MISMATCH REPAIR PROTEIN MSH3"/>
    <property type="match status" value="1"/>
</dbReference>
<dbReference type="PANTHER" id="PTHR11361">
    <property type="entry name" value="DNA MISMATCH REPAIR PROTEIN MUTS FAMILY MEMBER"/>
    <property type="match status" value="1"/>
</dbReference>
<dbReference type="Pfam" id="PF01624">
    <property type="entry name" value="MutS_I"/>
    <property type="match status" value="1"/>
</dbReference>
<dbReference type="Pfam" id="PF05188">
    <property type="entry name" value="MutS_II"/>
    <property type="match status" value="1"/>
</dbReference>
<dbReference type="Pfam" id="PF05192">
    <property type="entry name" value="MutS_III"/>
    <property type="match status" value="1"/>
</dbReference>
<dbReference type="Pfam" id="PF00488">
    <property type="entry name" value="MutS_V"/>
    <property type="match status" value="1"/>
</dbReference>
<dbReference type="PIRSF" id="PIRSF037677">
    <property type="entry name" value="DNA_mis_repair_Msh6"/>
    <property type="match status" value="1"/>
</dbReference>
<dbReference type="SMART" id="SM00534">
    <property type="entry name" value="MUTSac"/>
    <property type="match status" value="1"/>
</dbReference>
<dbReference type="SMART" id="SM00533">
    <property type="entry name" value="MUTSd"/>
    <property type="match status" value="1"/>
</dbReference>
<dbReference type="SUPFAM" id="SSF55271">
    <property type="entry name" value="DNA repair protein MutS, domain I"/>
    <property type="match status" value="1"/>
</dbReference>
<dbReference type="SUPFAM" id="SSF53150">
    <property type="entry name" value="DNA repair protein MutS, domain II"/>
    <property type="match status" value="1"/>
</dbReference>
<dbReference type="SUPFAM" id="SSF48334">
    <property type="entry name" value="DNA repair protein MutS, domain III"/>
    <property type="match status" value="1"/>
</dbReference>
<dbReference type="SUPFAM" id="SSF52540">
    <property type="entry name" value="P-loop containing nucleoside triphosphate hydrolases"/>
    <property type="match status" value="1"/>
</dbReference>
<dbReference type="PROSITE" id="PS00486">
    <property type="entry name" value="DNA_MISMATCH_REPAIR_2"/>
    <property type="match status" value="1"/>
</dbReference>
<comment type="function">
    <text evidence="1">Component of the post-replicative DNA mismatch repair system (MMR). Heterodimerizes with msh2 to form MutS beta, which binds to DNA mismatches thereby initiating DNA repair. When bound, the MutS beta heterodimer bends the DNA helix and shields approximately 20 base pairs. MutS beta recognizes large insertion-deletion loops (IDL) up to 13 nucleotides long. After mismatch binding, forms a ternary complex with the MutL alpha heterodimer, which is thought to be responsible for directing the downstream MMR events, including strand discrimination, excision, and resynthesis (By similarity).</text>
</comment>
<comment type="subunit">
    <text evidence="1">Heterodimer consisting of msh2-msh3 (MutS beta). Forms a ternary complex with MutL alpha (mlh1-pms1). Interacts with exo1 (By similarity).</text>
</comment>
<comment type="similarity">
    <text evidence="3">Belongs to the DNA mismatch repair MutS family. MSH3 subfamily.</text>
</comment>
<keyword id="KW-0067">ATP-binding</keyword>
<keyword id="KW-0227">DNA damage</keyword>
<keyword id="KW-0234">DNA repair</keyword>
<keyword id="KW-0238">DNA-binding</keyword>
<keyword id="KW-0547">Nucleotide-binding</keyword>
<keyword id="KW-1185">Reference proteome</keyword>
<organism>
    <name type="scientific">Dictyostelium discoideum</name>
    <name type="common">Social amoeba</name>
    <dbReference type="NCBI Taxonomy" id="44689"/>
    <lineage>
        <taxon>Eukaryota</taxon>
        <taxon>Amoebozoa</taxon>
        <taxon>Evosea</taxon>
        <taxon>Eumycetozoa</taxon>
        <taxon>Dictyostelia</taxon>
        <taxon>Dictyosteliales</taxon>
        <taxon>Dictyosteliaceae</taxon>
        <taxon>Dictyostelium</taxon>
    </lineage>
</organism>
<sequence length="1428" mass="161570">MPRLKLPKSFKDELESEKTTTTSSRKKAPVVDPKQTLMSSFFTPVSKSTDTKEINNKEDKDEDKDKDKDNKKTKKSKDTSDNEDMVDDNNKQQKEKKATPNKSNSPQSPQTSKSPLTRRSSANGNSDSKIDNKEKEKEKEKEKEKDKSTPTKTTSSRVKKDTEVSKSIPPKLSKQTKKKQISSDNDIYDDEKDSEEEDLEDDHDDEEEKVVVKKPSKPTSKSITAKPASTKATTTTTTTTTTTSTGRTRVNRVNLDISFSSESEEDEKPKKKIIGKKRKKKDDSDFDSESESDTISEASEVEPESEEDLDSFKFNSKKKNNNKNNNNKKKNDEYEDEEEDEDDELFKDIEMKDKPEEEEKEEEGDPIVIGSGRVVLPKGTPDFQPDPKAGKKLLKAHLEIQSKEEAKRLQQANGGGGDGGGGQIKGSDDEDEEVKKPTKGGSKASAKKKGPAYTPLEQQYIAIKKENPDTVLMVECGYKYKFFGEDAEVANKVLNIYSYVAKNFLNCSIPTQRLFFHLRRLVMAGYKVGIVEQTETAALKAISSSKSQPFERKLTRVYTSSTFIDDDIDDQLTSSSPQFLVSFYESTPKNKNDDVIKKQRDNEEEGIDSSNESSTSTISFVAVSVKTGEIIYDTFKDNVMRSQLETILTHIKPSEILIPPTTTTVNKQKVNNGIGTNHYYFSNLTSKCLKTYTKSTNVRTQAMDSQLYDYEYSLGKLIDFYEDESNNNNNNNNCEDVLKFVKSTLNKEQIICLGILLSYLNEFIHFGSILKVESNFKAFRVSNHLVLPHSTIVNLELLVNESDNKEKGSLIWLMNRTSTFSGSRMFINWICKPLNQLELIKERQDAVEELVNGIKTNSPPIVSIISLFKSHIPDLQRNLSRIYYKVQCTPKEFLNTMTSLQRIVELFKEINNNNSSYKFNSTLLNSIFKLQNDNKDGDSDSFDYIGGEDKLSKRIKYFLSNINKETAKEYGTVGCDKSNLWVDLEKYEKIRETKEKIEQVEKEFKNVLKNIRKELSKPSLEYHHMPGLGLEYLLELPPSFKAVPKSWIKVNSTQKMARYHAPEVLEQLKILSQSRETLKIQSQESWISFLGEFSVDYSLFSNFVNKISNLDCLFSLAKVSSLEGYIRPQFVKEKKDGGIQIENGRHPVVEAILSGSDGSYVPNTIELRESACKSMIITGPNMGGKSSLLRQTALIVIMAQVGCFVPATSCSLSVFDAIYTRMGARDSIGTGKSTFFIELEETSDILKNSTQNTLVILDELGRGTSTNDGVAIAYSTLKYIVEVMKCYCLFVTHYPLLAQLELQYPTQVGNFHMGYLEEKQDQQLQKSVIPKVIFLYKLVKGAAQNSYGLNIARLAGLPMEVIADALKKSNEMKESITRRANLSDGKDQQQIENEIKSIIKNWNSNRTTLNSNDLLQFIEKFKSIQLKL</sequence>
<name>MSH3_DICDI</name>
<proteinExistence type="inferred from homology"/>